<gene>
    <name evidence="1" type="primary">rbfA</name>
    <name type="ordered locus">CHU_3629</name>
</gene>
<sequence>MESVRQQKVARLILKEMADIFLKESRVLFGNVFISITVVRMSPDLSVAKLYLSIMLQEDKNAILKEIKVHTKELRKLLGERIRKQVRIIPEIIFYLDDNVDYANHMDDVLSKITIPKKEDENFDPNQYPGLKE</sequence>
<keyword id="KW-0963">Cytoplasm</keyword>
<keyword id="KW-1185">Reference proteome</keyword>
<keyword id="KW-0690">Ribosome biogenesis</keyword>
<evidence type="ECO:0000255" key="1">
    <source>
        <dbReference type="HAMAP-Rule" id="MF_00003"/>
    </source>
</evidence>
<feature type="chain" id="PRO_0000321214" description="Ribosome-binding factor A">
    <location>
        <begin position="1"/>
        <end position="133"/>
    </location>
</feature>
<reference key="1">
    <citation type="journal article" date="2007" name="Appl. Environ. Microbiol.">
        <title>Genome sequence of the cellulolytic gliding bacterium Cytophaga hutchinsonii.</title>
        <authorList>
            <person name="Xie G."/>
            <person name="Bruce D.C."/>
            <person name="Challacombe J.F."/>
            <person name="Chertkov O."/>
            <person name="Detter J.C."/>
            <person name="Gilna P."/>
            <person name="Han C.S."/>
            <person name="Lucas S."/>
            <person name="Misra M."/>
            <person name="Myers G.L."/>
            <person name="Richardson P."/>
            <person name="Tapia R."/>
            <person name="Thayer N."/>
            <person name="Thompson L.S."/>
            <person name="Brettin T.S."/>
            <person name="Henrissat B."/>
            <person name="Wilson D.B."/>
            <person name="McBride M.J."/>
        </authorList>
    </citation>
    <scope>NUCLEOTIDE SEQUENCE [LARGE SCALE GENOMIC DNA]</scope>
    <source>
        <strain>ATCC 33406 / DSM 1761 / JCM 20678 / CIP 103989 / IAM 12607 / NBRC 15051 / NCIMB 9469 / D465</strain>
    </source>
</reference>
<comment type="function">
    <text evidence="1">One of several proteins that assist in the late maturation steps of the functional core of the 30S ribosomal subunit. Associates with free 30S ribosomal subunits (but not with 30S subunits that are part of 70S ribosomes or polysomes). Required for efficient processing of 16S rRNA. May interact with the 5'-terminal helix region of 16S rRNA.</text>
</comment>
<comment type="subunit">
    <text evidence="1">Monomer. Binds 30S ribosomal subunits, but not 50S ribosomal subunits or 70S ribosomes.</text>
</comment>
<comment type="subcellular location">
    <subcellularLocation>
        <location evidence="1">Cytoplasm</location>
    </subcellularLocation>
</comment>
<comment type="similarity">
    <text evidence="1">Belongs to the RbfA family.</text>
</comment>
<organism>
    <name type="scientific">Cytophaga hutchinsonii (strain ATCC 33406 / DSM 1761 / CIP 103989 / NBRC 15051 / NCIMB 9469 / D465)</name>
    <dbReference type="NCBI Taxonomy" id="269798"/>
    <lineage>
        <taxon>Bacteria</taxon>
        <taxon>Pseudomonadati</taxon>
        <taxon>Bacteroidota</taxon>
        <taxon>Cytophagia</taxon>
        <taxon>Cytophagales</taxon>
        <taxon>Cytophagaceae</taxon>
        <taxon>Cytophaga</taxon>
    </lineage>
</organism>
<dbReference type="EMBL" id="CP000383">
    <property type="protein sequence ID" value="ABG60862.1"/>
    <property type="molecule type" value="Genomic_DNA"/>
</dbReference>
<dbReference type="RefSeq" id="WP_011586967.1">
    <property type="nucleotide sequence ID" value="NC_008255.1"/>
</dbReference>
<dbReference type="SMR" id="Q11P01"/>
<dbReference type="STRING" id="269798.CHU_3629"/>
<dbReference type="KEGG" id="chu:CHU_3629"/>
<dbReference type="eggNOG" id="COG0858">
    <property type="taxonomic scope" value="Bacteria"/>
</dbReference>
<dbReference type="HOGENOM" id="CLU_089475_4_1_10"/>
<dbReference type="OrthoDB" id="9811910at2"/>
<dbReference type="Proteomes" id="UP000001822">
    <property type="component" value="Chromosome"/>
</dbReference>
<dbReference type="GO" id="GO:0005829">
    <property type="term" value="C:cytosol"/>
    <property type="evidence" value="ECO:0007669"/>
    <property type="project" value="TreeGrafter"/>
</dbReference>
<dbReference type="GO" id="GO:0043024">
    <property type="term" value="F:ribosomal small subunit binding"/>
    <property type="evidence" value="ECO:0007669"/>
    <property type="project" value="TreeGrafter"/>
</dbReference>
<dbReference type="GO" id="GO:0030490">
    <property type="term" value="P:maturation of SSU-rRNA"/>
    <property type="evidence" value="ECO:0007669"/>
    <property type="project" value="UniProtKB-UniRule"/>
</dbReference>
<dbReference type="Gene3D" id="3.30.300.20">
    <property type="match status" value="1"/>
</dbReference>
<dbReference type="HAMAP" id="MF_00003">
    <property type="entry name" value="RbfA"/>
    <property type="match status" value="1"/>
</dbReference>
<dbReference type="InterPro" id="IPR015946">
    <property type="entry name" value="KH_dom-like_a/b"/>
</dbReference>
<dbReference type="InterPro" id="IPR000238">
    <property type="entry name" value="RbfA"/>
</dbReference>
<dbReference type="InterPro" id="IPR023799">
    <property type="entry name" value="RbfA_dom_sf"/>
</dbReference>
<dbReference type="PANTHER" id="PTHR33515">
    <property type="entry name" value="RIBOSOME-BINDING FACTOR A, CHLOROPLASTIC-RELATED"/>
    <property type="match status" value="1"/>
</dbReference>
<dbReference type="PANTHER" id="PTHR33515:SF1">
    <property type="entry name" value="RIBOSOME-BINDING FACTOR A, CHLOROPLASTIC-RELATED"/>
    <property type="match status" value="1"/>
</dbReference>
<dbReference type="Pfam" id="PF02033">
    <property type="entry name" value="RBFA"/>
    <property type="match status" value="1"/>
</dbReference>
<dbReference type="SUPFAM" id="SSF89919">
    <property type="entry name" value="Ribosome-binding factor A, RbfA"/>
    <property type="match status" value="1"/>
</dbReference>
<proteinExistence type="inferred from homology"/>
<accession>Q11P01</accession>
<protein>
    <recommendedName>
        <fullName evidence="1">Ribosome-binding factor A</fullName>
    </recommendedName>
</protein>
<name>RBFA_CYTH3</name>